<reference key="1">
    <citation type="submission" date="2007-03" db="EMBL/GenBank/DDBJ databases">
        <title>Complete sequence of Prosthecochloris vibrioformis DSM 265.</title>
        <authorList>
            <consortium name="US DOE Joint Genome Institute"/>
            <person name="Copeland A."/>
            <person name="Lucas S."/>
            <person name="Lapidus A."/>
            <person name="Barry K."/>
            <person name="Detter J.C."/>
            <person name="Glavina del Rio T."/>
            <person name="Hammon N."/>
            <person name="Israni S."/>
            <person name="Pitluck S."/>
            <person name="Schmutz J."/>
            <person name="Larimer F."/>
            <person name="Land M."/>
            <person name="Hauser L."/>
            <person name="Mikhailova N."/>
            <person name="Li T."/>
            <person name="Overmann J."/>
            <person name="Schuster S.C."/>
            <person name="Bryant D.A."/>
            <person name="Richardson P."/>
        </authorList>
    </citation>
    <scope>NUCLEOTIDE SEQUENCE [LARGE SCALE GENOMIC DNA]</scope>
    <source>
        <strain>DSM 265 / 1930</strain>
    </source>
</reference>
<evidence type="ECO:0000255" key="1">
    <source>
        <dbReference type="HAMAP-Rule" id="MF_00161"/>
    </source>
</evidence>
<sequence>MRWFFFLLLSVIGLDRFTKQLAIIFLRDTGESITIIPGLFSLTYAENRGIAFGMEFLPPGVLLILTTIIVSGVIIYALYQGNRQPLFLGSFGLIAGGGIGNLIDRFTTGRVVDFLYFDLYRGELFGQWIALWPIFNIADSAITIGACMLIIFYGRIFPDSTASGGNNVC</sequence>
<protein>
    <recommendedName>
        <fullName evidence="1">Lipoprotein signal peptidase</fullName>
        <ecNumber evidence="1">3.4.23.36</ecNumber>
    </recommendedName>
    <alternativeName>
        <fullName evidence="1">Prolipoprotein signal peptidase</fullName>
    </alternativeName>
    <alternativeName>
        <fullName evidence="1">Signal peptidase II</fullName>
        <shortName evidence="1">SPase II</shortName>
    </alternativeName>
</protein>
<organism>
    <name type="scientific">Chlorobium phaeovibrioides (strain DSM 265 / 1930)</name>
    <name type="common">Prosthecochloris vibrioformis (strain DSM 265)</name>
    <dbReference type="NCBI Taxonomy" id="290318"/>
    <lineage>
        <taxon>Bacteria</taxon>
        <taxon>Pseudomonadati</taxon>
        <taxon>Chlorobiota</taxon>
        <taxon>Chlorobiia</taxon>
        <taxon>Chlorobiales</taxon>
        <taxon>Chlorobiaceae</taxon>
        <taxon>Chlorobium/Pelodictyon group</taxon>
        <taxon>Chlorobium</taxon>
    </lineage>
</organism>
<feature type="chain" id="PRO_1000076928" description="Lipoprotein signal peptidase">
    <location>
        <begin position="1"/>
        <end position="169"/>
    </location>
</feature>
<feature type="transmembrane region" description="Helical" evidence="1">
    <location>
        <begin position="56"/>
        <end position="76"/>
    </location>
</feature>
<feature type="transmembrane region" description="Helical" evidence="1">
    <location>
        <begin position="84"/>
        <end position="104"/>
    </location>
</feature>
<feature type="transmembrane region" description="Helical" evidence="1">
    <location>
        <begin position="132"/>
        <end position="152"/>
    </location>
</feature>
<feature type="active site" evidence="1">
    <location>
        <position position="113"/>
    </location>
</feature>
<feature type="active site" evidence="1">
    <location>
        <position position="139"/>
    </location>
</feature>
<proteinExistence type="inferred from homology"/>
<gene>
    <name evidence="1" type="primary">lspA</name>
    <name type="ordered locus">Cvib_0538</name>
</gene>
<comment type="function">
    <text evidence="1">This protein specifically catalyzes the removal of signal peptides from prolipoproteins.</text>
</comment>
<comment type="catalytic activity">
    <reaction evidence="1">
        <text>Release of signal peptides from bacterial membrane prolipoproteins. Hydrolyzes -Xaa-Yaa-Zaa-|-(S,diacylglyceryl)Cys-, in which Xaa is hydrophobic (preferably Leu), and Yaa (Ala or Ser) and Zaa (Gly or Ala) have small, neutral side chains.</text>
        <dbReference type="EC" id="3.4.23.36"/>
    </reaction>
</comment>
<comment type="pathway">
    <text evidence="1">Protein modification; lipoprotein biosynthesis (signal peptide cleavage).</text>
</comment>
<comment type="subcellular location">
    <subcellularLocation>
        <location evidence="1">Cell inner membrane</location>
        <topology evidence="1">Multi-pass membrane protein</topology>
    </subcellularLocation>
</comment>
<comment type="similarity">
    <text evidence="1">Belongs to the peptidase A8 family.</text>
</comment>
<name>LSPA_CHLPM</name>
<keyword id="KW-0064">Aspartyl protease</keyword>
<keyword id="KW-0997">Cell inner membrane</keyword>
<keyword id="KW-1003">Cell membrane</keyword>
<keyword id="KW-0378">Hydrolase</keyword>
<keyword id="KW-0472">Membrane</keyword>
<keyword id="KW-0645">Protease</keyword>
<keyword id="KW-0812">Transmembrane</keyword>
<keyword id="KW-1133">Transmembrane helix</keyword>
<dbReference type="EC" id="3.4.23.36" evidence="1"/>
<dbReference type="EMBL" id="CP000607">
    <property type="protein sequence ID" value="ABP36560.1"/>
    <property type="molecule type" value="Genomic_DNA"/>
</dbReference>
<dbReference type="SMR" id="A4SDK1"/>
<dbReference type="STRING" id="290318.Cvib_0538"/>
<dbReference type="KEGG" id="pvi:Cvib_0538"/>
<dbReference type="eggNOG" id="COG0597">
    <property type="taxonomic scope" value="Bacteria"/>
</dbReference>
<dbReference type="HOGENOM" id="CLU_083252_3_1_10"/>
<dbReference type="OrthoDB" id="9810259at2"/>
<dbReference type="UniPathway" id="UPA00665"/>
<dbReference type="GO" id="GO:0005886">
    <property type="term" value="C:plasma membrane"/>
    <property type="evidence" value="ECO:0007669"/>
    <property type="project" value="UniProtKB-SubCell"/>
</dbReference>
<dbReference type="GO" id="GO:0004190">
    <property type="term" value="F:aspartic-type endopeptidase activity"/>
    <property type="evidence" value="ECO:0007669"/>
    <property type="project" value="UniProtKB-UniRule"/>
</dbReference>
<dbReference type="GO" id="GO:0006508">
    <property type="term" value="P:proteolysis"/>
    <property type="evidence" value="ECO:0007669"/>
    <property type="project" value="UniProtKB-KW"/>
</dbReference>
<dbReference type="HAMAP" id="MF_00161">
    <property type="entry name" value="LspA"/>
    <property type="match status" value="1"/>
</dbReference>
<dbReference type="InterPro" id="IPR001872">
    <property type="entry name" value="Peptidase_A8"/>
</dbReference>
<dbReference type="NCBIfam" id="TIGR00077">
    <property type="entry name" value="lspA"/>
    <property type="match status" value="1"/>
</dbReference>
<dbReference type="NCBIfam" id="NF011368">
    <property type="entry name" value="PRK14787.1"/>
    <property type="match status" value="1"/>
</dbReference>
<dbReference type="PANTHER" id="PTHR33695">
    <property type="entry name" value="LIPOPROTEIN SIGNAL PEPTIDASE"/>
    <property type="match status" value="1"/>
</dbReference>
<dbReference type="PANTHER" id="PTHR33695:SF1">
    <property type="entry name" value="LIPOPROTEIN SIGNAL PEPTIDASE"/>
    <property type="match status" value="1"/>
</dbReference>
<dbReference type="Pfam" id="PF01252">
    <property type="entry name" value="Peptidase_A8"/>
    <property type="match status" value="1"/>
</dbReference>
<dbReference type="PRINTS" id="PR00781">
    <property type="entry name" value="LIPOSIGPTASE"/>
</dbReference>
<dbReference type="PROSITE" id="PS00855">
    <property type="entry name" value="SPASE_II"/>
    <property type="match status" value="1"/>
</dbReference>
<accession>A4SDK1</accession>